<keyword id="KW-0963">Cytoplasm</keyword>
<keyword id="KW-0539">Nucleus</keyword>
<keyword id="KW-1185">Reference proteome</keyword>
<organism>
    <name type="scientific">Saccharomyces cerevisiae (strain ATCC 204508 / S288c)</name>
    <name type="common">Baker's yeast</name>
    <dbReference type="NCBI Taxonomy" id="559292"/>
    <lineage>
        <taxon>Eukaryota</taxon>
        <taxon>Fungi</taxon>
        <taxon>Dikarya</taxon>
        <taxon>Ascomycota</taxon>
        <taxon>Saccharomycotina</taxon>
        <taxon>Saccharomycetes</taxon>
        <taxon>Saccharomycetales</taxon>
        <taxon>Saccharomycetaceae</taxon>
        <taxon>Saccharomyces</taxon>
    </lineage>
</organism>
<reference key="1">
    <citation type="journal article" date="1996" name="EMBO J.">
        <title>Complete nucleotide sequence of Saccharomyces cerevisiae chromosome X.</title>
        <authorList>
            <person name="Galibert F."/>
            <person name="Alexandraki D."/>
            <person name="Baur A."/>
            <person name="Boles E."/>
            <person name="Chalwatzis N."/>
            <person name="Chuat J.-C."/>
            <person name="Coster F."/>
            <person name="Cziepluch C."/>
            <person name="de Haan M."/>
            <person name="Domdey H."/>
            <person name="Durand P."/>
            <person name="Entian K.-D."/>
            <person name="Gatius M."/>
            <person name="Goffeau A."/>
            <person name="Grivell L.A."/>
            <person name="Hennemann A."/>
            <person name="Herbert C.J."/>
            <person name="Heumann K."/>
            <person name="Hilger F."/>
            <person name="Hollenberg C.P."/>
            <person name="Huang M.-E."/>
            <person name="Jacq C."/>
            <person name="Jauniaux J.-C."/>
            <person name="Katsoulou C."/>
            <person name="Kirchrath L."/>
            <person name="Kleine K."/>
            <person name="Kordes E."/>
            <person name="Koetter P."/>
            <person name="Liebl S."/>
            <person name="Louis E.J."/>
            <person name="Manus V."/>
            <person name="Mewes H.-W."/>
            <person name="Miosga T."/>
            <person name="Obermaier B."/>
            <person name="Perea J."/>
            <person name="Pohl T.M."/>
            <person name="Portetelle D."/>
            <person name="Pujol A."/>
            <person name="Purnelle B."/>
            <person name="Ramezani Rad M."/>
            <person name="Rasmussen S.W."/>
            <person name="Rose M."/>
            <person name="Rossau R."/>
            <person name="Schaaff-Gerstenschlaeger I."/>
            <person name="Smits P.H.M."/>
            <person name="Scarcez T."/>
            <person name="Soriano N."/>
            <person name="To Van D."/>
            <person name="Tzermia M."/>
            <person name="Van Broekhoven A."/>
            <person name="Vandenbol M."/>
            <person name="Wedler H."/>
            <person name="von Wettstein D."/>
            <person name="Wambutt R."/>
            <person name="Zagulski M."/>
            <person name="Zollner A."/>
            <person name="Karpfinger-Hartl L."/>
        </authorList>
    </citation>
    <scope>NUCLEOTIDE SEQUENCE [LARGE SCALE GENOMIC DNA]</scope>
    <source>
        <strain>ATCC 204508 / S288c</strain>
    </source>
</reference>
<reference key="2">
    <citation type="journal article" date="2014" name="G3 (Bethesda)">
        <title>The reference genome sequence of Saccharomyces cerevisiae: Then and now.</title>
        <authorList>
            <person name="Engel S.R."/>
            <person name="Dietrich F.S."/>
            <person name="Fisk D.G."/>
            <person name="Binkley G."/>
            <person name="Balakrishnan R."/>
            <person name="Costanzo M.C."/>
            <person name="Dwight S.S."/>
            <person name="Hitz B.C."/>
            <person name="Karra K."/>
            <person name="Nash R.S."/>
            <person name="Weng S."/>
            <person name="Wong E.D."/>
            <person name="Lloyd P."/>
            <person name="Skrzypek M.S."/>
            <person name="Miyasato S.R."/>
            <person name="Simison M."/>
            <person name="Cherry J.M."/>
        </authorList>
    </citation>
    <scope>GENOME REANNOTATION</scope>
    <source>
        <strain>ATCC 204508 / S288c</strain>
    </source>
</reference>
<reference key="3">
    <citation type="journal article" date="2000" name="Mol. Biol. Cell">
        <title>Genomic expression programs in the response of yeast cells to environmental changes.</title>
        <authorList>
            <person name="Gasch A.P."/>
            <person name="Spellman P.T."/>
            <person name="Kao C.M."/>
            <person name="Carmel-Harel O."/>
            <person name="Eisen M.B."/>
            <person name="Storz G."/>
            <person name="Botstein D."/>
            <person name="Brown P.O."/>
        </authorList>
    </citation>
    <scope>INDUCTION</scope>
</reference>
<reference key="4">
    <citation type="journal article" date="2003" name="J. Biochem.">
        <title>Response of genes associated with mitochondrial function to mild heat stress in yeast Saccharomyces cerevisiae.</title>
        <authorList>
            <person name="Sakaki K."/>
            <person name="Tashiro K."/>
            <person name="Kuhara S."/>
            <person name="Mihara K."/>
        </authorList>
    </citation>
    <scope>INDUCTION</scope>
</reference>
<reference key="5">
    <citation type="journal article" date="2003" name="J. Biol. Chem.">
        <title>Genome expression analysis in yeast reveals novel transcriptional regulation by inositol and choline and new regulatory functions for Opi1p, Ino2p, and Ino4p.</title>
        <authorList>
            <person name="Santiago T.C."/>
            <person name="Mamoun C.B."/>
        </authorList>
    </citation>
    <scope>INDUCTION</scope>
</reference>
<reference key="6">
    <citation type="journal article" date="2003" name="Nature">
        <title>Global analysis of protein expression in yeast.</title>
        <authorList>
            <person name="Ghaemmaghami S."/>
            <person name="Huh W.-K."/>
            <person name="Bower K."/>
            <person name="Howson R.W."/>
            <person name="Belle A."/>
            <person name="Dephoure N."/>
            <person name="O'Shea E.K."/>
            <person name="Weissman J.S."/>
        </authorList>
    </citation>
    <scope>LEVEL OF PROTEIN EXPRESSION [LARGE SCALE ANALYSIS]</scope>
</reference>
<reference key="7">
    <citation type="journal article" date="2012" name="PLoS ONE">
        <title>MHO1, an evolutionarily conserved gene, is synthetic lethal with PLC1; Mho1p has a role in invasive growth.</title>
        <authorList>
            <person name="Schlatter I.D."/>
            <person name="Meira M."/>
            <person name="Ueberschlag V."/>
            <person name="Hoepfner D."/>
            <person name="Movva R."/>
            <person name="Hynes N.E."/>
        </authorList>
    </citation>
    <scope>IDENTIFICATION</scope>
    <scope>DISRUPTION PHENOTYPE</scope>
    <scope>SUBCELLULAR LOCATION</scope>
</reference>
<sequence length="338" mass="38482">MSIRPATHAGSWYSNRAQELSQQLHTYLIKSTLKGPIHNARIIICPHAGYRYCGPTMAYSYASLDLNRNVKRIFILGPSHHIYFKNQILVSAFSELETPLGNLKVDTDLCKTLIQKEYPENGKKLFKPMDHDTDMAEHSLEMQLPMLVETLKWREISLDTVKVFPMMVSHNSVDVDRCIGNILSEYIKDPNNLFIVSSDFCHWGRRFQYTGYVGSKEELNDAIQEETEVEMLTARSKLSHHQVPIWQSIEIMDRYAMKTLSDTPNGERYDAWKQYLEITGNTICGEKPISVILSALSKIRDAGPSGIKFQWPNYSQSSHVTSIDDSSVSYASGYVTIG</sequence>
<gene>
    <name evidence="6" type="primary">MHO1</name>
    <name type="ordered locus">YJR008W</name>
    <name type="ORF">J1431</name>
    <name type="ORF">YJR83.9</name>
</gene>
<dbReference type="EMBL" id="X87611">
    <property type="protein sequence ID" value="CAA60930.1"/>
    <property type="molecule type" value="Genomic_DNA"/>
</dbReference>
<dbReference type="EMBL" id="Z49508">
    <property type="protein sequence ID" value="CAA89530.1"/>
    <property type="molecule type" value="Genomic_DNA"/>
</dbReference>
<dbReference type="EMBL" id="BK006943">
    <property type="protein sequence ID" value="DAA08799.1"/>
    <property type="molecule type" value="Genomic_DNA"/>
</dbReference>
<dbReference type="PIR" id="S55196">
    <property type="entry name" value="S55196"/>
</dbReference>
<dbReference type="RefSeq" id="NP_012541.1">
    <property type="nucleotide sequence ID" value="NM_001181665.1"/>
</dbReference>
<dbReference type="SMR" id="P47085"/>
<dbReference type="BioGRID" id="33764">
    <property type="interactions" value="33"/>
</dbReference>
<dbReference type="DIP" id="DIP-5693N"/>
<dbReference type="FunCoup" id="P47085">
    <property type="interactions" value="606"/>
</dbReference>
<dbReference type="IntAct" id="P47085">
    <property type="interactions" value="2"/>
</dbReference>
<dbReference type="STRING" id="4932.YJR008W"/>
<dbReference type="GlyGen" id="P47085">
    <property type="glycosylation" value="1 site"/>
</dbReference>
<dbReference type="iPTMnet" id="P47085"/>
<dbReference type="PaxDb" id="4932-YJR008W"/>
<dbReference type="PeptideAtlas" id="P47085"/>
<dbReference type="EnsemblFungi" id="YJR008W_mRNA">
    <property type="protein sequence ID" value="YJR008W"/>
    <property type="gene ID" value="YJR008W"/>
</dbReference>
<dbReference type="GeneID" id="853464"/>
<dbReference type="KEGG" id="sce:YJR008W"/>
<dbReference type="AGR" id="SGD:S000003768"/>
<dbReference type="SGD" id="S000003768">
    <property type="gene designation" value="MHO1"/>
</dbReference>
<dbReference type="VEuPathDB" id="FungiDB:YJR008W"/>
<dbReference type="eggNOG" id="KOG3086">
    <property type="taxonomic scope" value="Eukaryota"/>
</dbReference>
<dbReference type="GeneTree" id="ENSGT00390000006408"/>
<dbReference type="HOGENOM" id="CLU_038085_0_0_1"/>
<dbReference type="InParanoid" id="P47085"/>
<dbReference type="OMA" id="MHLPYIH"/>
<dbReference type="OrthoDB" id="417112at2759"/>
<dbReference type="BioCyc" id="YEAST:G3O-31654-MONOMER"/>
<dbReference type="BioGRID-ORCS" id="853464">
    <property type="hits" value="0 hits in 10 CRISPR screens"/>
</dbReference>
<dbReference type="PRO" id="PR:P47085"/>
<dbReference type="Proteomes" id="UP000002311">
    <property type="component" value="Chromosome X"/>
</dbReference>
<dbReference type="RNAct" id="P47085">
    <property type="molecule type" value="protein"/>
</dbReference>
<dbReference type="GO" id="GO:0005737">
    <property type="term" value="C:cytoplasm"/>
    <property type="evidence" value="ECO:0000314"/>
    <property type="project" value="SGD"/>
</dbReference>
<dbReference type="GO" id="GO:0005634">
    <property type="term" value="C:nucleus"/>
    <property type="evidence" value="ECO:0000314"/>
    <property type="project" value="SGD"/>
</dbReference>
<dbReference type="CDD" id="cd07361">
    <property type="entry name" value="MEMO_like"/>
    <property type="match status" value="1"/>
</dbReference>
<dbReference type="FunFam" id="3.40.830.10:FF:000004">
    <property type="entry name" value="YJR008W-like protein"/>
    <property type="match status" value="1"/>
</dbReference>
<dbReference type="Gene3D" id="3.40.830.10">
    <property type="entry name" value="LigB-like"/>
    <property type="match status" value="1"/>
</dbReference>
<dbReference type="HAMAP" id="MF_00055">
    <property type="entry name" value="MEMO1"/>
    <property type="match status" value="1"/>
</dbReference>
<dbReference type="InterPro" id="IPR002737">
    <property type="entry name" value="MEMO1_fam"/>
</dbReference>
<dbReference type="NCBIfam" id="TIGR04336">
    <property type="entry name" value="AmmeMemoSam_B"/>
    <property type="match status" value="1"/>
</dbReference>
<dbReference type="PANTHER" id="PTHR11060">
    <property type="entry name" value="PROTEIN MEMO1"/>
    <property type="match status" value="1"/>
</dbReference>
<dbReference type="PANTHER" id="PTHR11060:SF0">
    <property type="entry name" value="PROTEIN MEMO1"/>
    <property type="match status" value="1"/>
</dbReference>
<dbReference type="Pfam" id="PF01875">
    <property type="entry name" value="Memo"/>
    <property type="match status" value="1"/>
</dbReference>
<comment type="function">
    <text evidence="5">Plays a role in haploid invasive growth under conditions of nutrient insufficiency, suggesting that the function of the MEMO1 family in cell motility/invasion is conserved across species.</text>
</comment>
<comment type="subcellular location">
    <subcellularLocation>
        <location evidence="5">Cytoplasm</location>
    </subcellularLocation>
    <subcellularLocation>
        <location evidence="5">Nucleus</location>
    </subcellularLocation>
    <text evidence="5">Is actively exported from the nucleus.</text>
</comment>
<comment type="induction">
    <text evidence="1 2 3">Expression is induced by mild heat-stress on a non-fermentable carbon source (PubMed:14561723). Expression is also induced upon entry into stationary phase and upon nitrogen deprivation (PubMed:11102521). Expression is repressed by inosine and choline in an OPI1-dependent manner (PubMed:12871953).</text>
</comment>
<comment type="disruption phenotype">
    <text evidence="5">Is synthetic lethal with PLC1.</text>
</comment>
<comment type="miscellaneous">
    <text evidence="4">Present with 339 molecules/cell in log phase SD medium.</text>
</comment>
<comment type="similarity">
    <text evidence="7">Belongs to the MEMO1 family.</text>
</comment>
<proteinExistence type="evidence at protein level"/>
<protein>
    <recommendedName>
        <fullName evidence="6">MEMO1 family protein MHO1</fullName>
    </recommendedName>
    <alternativeName>
        <fullName evidence="6">Memo-homolog 1</fullName>
    </alternativeName>
</protein>
<evidence type="ECO:0000269" key="1">
    <source>
    </source>
</evidence>
<evidence type="ECO:0000269" key="2">
    <source>
    </source>
</evidence>
<evidence type="ECO:0000269" key="3">
    <source>
    </source>
</evidence>
<evidence type="ECO:0000269" key="4">
    <source>
    </source>
</evidence>
<evidence type="ECO:0000269" key="5">
    <source>
    </source>
</evidence>
<evidence type="ECO:0000303" key="6">
    <source>
    </source>
</evidence>
<evidence type="ECO:0000305" key="7"/>
<accession>P47085</accession>
<accession>D6VWI3</accession>
<name>MHO1_YEAST</name>
<feature type="chain" id="PRO_0000134398" description="MEMO1 family protein MHO1">
    <location>
        <begin position="1"/>
        <end position="338"/>
    </location>
</feature>